<reference key="1">
    <citation type="journal article" date="1997" name="Nature">
        <title>The complete genome sequence of the hyperthermophilic, sulphate-reducing archaeon Archaeoglobus fulgidus.</title>
        <authorList>
            <person name="Klenk H.-P."/>
            <person name="Clayton R.A."/>
            <person name="Tomb J.-F."/>
            <person name="White O."/>
            <person name="Nelson K.E."/>
            <person name="Ketchum K.A."/>
            <person name="Dodson R.J."/>
            <person name="Gwinn M.L."/>
            <person name="Hickey E.K."/>
            <person name="Peterson J.D."/>
            <person name="Richardson D.L."/>
            <person name="Kerlavage A.R."/>
            <person name="Graham D.E."/>
            <person name="Kyrpides N.C."/>
            <person name="Fleischmann R.D."/>
            <person name="Quackenbush J."/>
            <person name="Lee N.H."/>
            <person name="Sutton G.G."/>
            <person name="Gill S.R."/>
            <person name="Kirkness E.F."/>
            <person name="Dougherty B.A."/>
            <person name="McKenney K."/>
            <person name="Adams M.D."/>
            <person name="Loftus B.J."/>
            <person name="Peterson S.N."/>
            <person name="Reich C.I."/>
            <person name="McNeil L.K."/>
            <person name="Badger J.H."/>
            <person name="Glodek A."/>
            <person name="Zhou L."/>
            <person name="Overbeek R."/>
            <person name="Gocayne J.D."/>
            <person name="Weidman J.F."/>
            <person name="McDonald L.A."/>
            <person name="Utterback T.R."/>
            <person name="Cotton M.D."/>
            <person name="Spriggs T."/>
            <person name="Artiach P."/>
            <person name="Kaine B.P."/>
            <person name="Sykes S.M."/>
            <person name="Sadow P.W."/>
            <person name="D'Andrea K.P."/>
            <person name="Bowman C."/>
            <person name="Fujii C."/>
            <person name="Garland S.A."/>
            <person name="Mason T.M."/>
            <person name="Olsen G.J."/>
            <person name="Fraser C.M."/>
            <person name="Smith H.O."/>
            <person name="Woese C.R."/>
            <person name="Venter J.C."/>
        </authorList>
    </citation>
    <scope>NUCLEOTIDE SEQUENCE [LARGE SCALE GENOMIC DNA]</scope>
    <source>
        <strain>ATCC 49558 / DSM 4304 / JCM 9628 / NBRC 100126 / VC-16</strain>
    </source>
</reference>
<accession>O28779</accession>
<protein>
    <recommendedName>
        <fullName>Probable archaeal histone A1-2</fullName>
    </recommendedName>
</protein>
<gene>
    <name type="primary">hpyA1-2</name>
    <name type="ordered locus">AF_1493</name>
</gene>
<comment type="function">
    <text evidence="1">Binds and compact DNA (95 to 150 base pairs) to form nucleosome-like structures that contain positive DNA supercoils. Increases the resistance of DNA to thermal denaturation (in vitro).</text>
</comment>
<comment type="subunit">
    <text evidence="1">Homodimer or heterodimer with another histone. Dimers then assemble into higher oligomers, with the DNA wrapped around the protein core (By similarity).</text>
</comment>
<comment type="subcellular location">
    <subcellularLocation>
        <location evidence="2">Cytoplasm</location>
    </subcellularLocation>
    <subcellularLocation>
        <location evidence="2">Chromosome</location>
    </subcellularLocation>
</comment>
<comment type="similarity">
    <text evidence="2">Belongs to the archaeal histone HMF family.</text>
</comment>
<sequence>MAELPMAPVDRLIRKAGAERVSADAVEKMVEVLEDYAITVAKKAVEIAKHSGRKTVTADDIKLALSM</sequence>
<proteinExistence type="inferred from homology"/>
<dbReference type="EMBL" id="AE000782">
    <property type="protein sequence ID" value="AAB89751.1"/>
    <property type="molecule type" value="Genomic_DNA"/>
</dbReference>
<dbReference type="PIR" id="D69436">
    <property type="entry name" value="D69436"/>
</dbReference>
<dbReference type="RefSeq" id="WP_010878990.1">
    <property type="nucleotide sequence ID" value="NC_000917.1"/>
</dbReference>
<dbReference type="SMR" id="O28779"/>
<dbReference type="STRING" id="224325.AF_1493"/>
<dbReference type="PaxDb" id="224325-AF_1493"/>
<dbReference type="EnsemblBacteria" id="AAB89751">
    <property type="protein sequence ID" value="AAB89751"/>
    <property type="gene ID" value="AF_1493"/>
</dbReference>
<dbReference type="KEGG" id="afu:AF_1493"/>
<dbReference type="eggNOG" id="arCOG02144">
    <property type="taxonomic scope" value="Archaea"/>
</dbReference>
<dbReference type="HOGENOM" id="CLU_192667_0_0_2"/>
<dbReference type="OrthoDB" id="7514at2157"/>
<dbReference type="PhylomeDB" id="O28779"/>
<dbReference type="Proteomes" id="UP000002199">
    <property type="component" value="Chromosome"/>
</dbReference>
<dbReference type="GO" id="GO:0005694">
    <property type="term" value="C:chromosome"/>
    <property type="evidence" value="ECO:0007669"/>
    <property type="project" value="UniProtKB-SubCell"/>
</dbReference>
<dbReference type="GO" id="GO:0005737">
    <property type="term" value="C:cytoplasm"/>
    <property type="evidence" value="ECO:0007669"/>
    <property type="project" value="UniProtKB-SubCell"/>
</dbReference>
<dbReference type="GO" id="GO:0003677">
    <property type="term" value="F:DNA binding"/>
    <property type="evidence" value="ECO:0007669"/>
    <property type="project" value="UniProtKB-KW"/>
</dbReference>
<dbReference type="GO" id="GO:0046982">
    <property type="term" value="F:protein heterodimerization activity"/>
    <property type="evidence" value="ECO:0007669"/>
    <property type="project" value="InterPro"/>
</dbReference>
<dbReference type="CDD" id="cd22909">
    <property type="entry name" value="HFD_archaea_histone-like"/>
    <property type="match status" value="1"/>
</dbReference>
<dbReference type="Gene3D" id="1.10.20.10">
    <property type="entry name" value="Histone, subunit A"/>
    <property type="match status" value="1"/>
</dbReference>
<dbReference type="InterPro" id="IPR050947">
    <property type="entry name" value="Archaeal_histone_HMF"/>
</dbReference>
<dbReference type="InterPro" id="IPR003958">
    <property type="entry name" value="CBFA_NFYB_domain"/>
</dbReference>
<dbReference type="InterPro" id="IPR009072">
    <property type="entry name" value="Histone-fold"/>
</dbReference>
<dbReference type="InterPro" id="IPR050004">
    <property type="entry name" value="HmfB-like"/>
</dbReference>
<dbReference type="NCBIfam" id="NF043032">
    <property type="entry name" value="archaea_histone"/>
    <property type="match status" value="1"/>
</dbReference>
<dbReference type="PANTHER" id="PTHR47828">
    <property type="entry name" value="ARCHAEAL HISTONE A"/>
    <property type="match status" value="1"/>
</dbReference>
<dbReference type="PANTHER" id="PTHR47828:SF1">
    <property type="entry name" value="ARCHAEAL HISTONE A"/>
    <property type="match status" value="1"/>
</dbReference>
<dbReference type="Pfam" id="PF00808">
    <property type="entry name" value="CBFD_NFYB_HMF"/>
    <property type="match status" value="1"/>
</dbReference>
<dbReference type="SUPFAM" id="SSF47113">
    <property type="entry name" value="Histone-fold"/>
    <property type="match status" value="1"/>
</dbReference>
<evidence type="ECO:0000250" key="1">
    <source>
        <dbReference type="UniProtKB" id="P19267"/>
    </source>
</evidence>
<evidence type="ECO:0000305" key="2"/>
<keyword id="KW-0158">Chromosome</keyword>
<keyword id="KW-0963">Cytoplasm</keyword>
<keyword id="KW-0238">DNA-binding</keyword>
<keyword id="KW-1185">Reference proteome</keyword>
<feature type="chain" id="PRO_0000154981" description="Probable archaeal histone A1-2">
    <location>
        <begin position="1"/>
        <end position="67"/>
    </location>
</feature>
<organism>
    <name type="scientific">Archaeoglobus fulgidus (strain ATCC 49558 / DSM 4304 / JCM 9628 / NBRC 100126 / VC-16)</name>
    <dbReference type="NCBI Taxonomy" id="224325"/>
    <lineage>
        <taxon>Archaea</taxon>
        <taxon>Methanobacteriati</taxon>
        <taxon>Methanobacteriota</taxon>
        <taxon>Archaeoglobi</taxon>
        <taxon>Archaeoglobales</taxon>
        <taxon>Archaeoglobaceae</taxon>
        <taxon>Archaeoglobus</taxon>
    </lineage>
</organism>
<name>HAF2_ARCFU</name>